<gene>
    <name evidence="1" type="primary">miaA</name>
    <name type="ordered locus">Nham_2723</name>
</gene>
<proteinExistence type="inferred from homology"/>
<sequence length="317" mass="34372">MSGTNPGEADGGAADAVLIAGPTASGKSALALSLAERTGGIVINTDSMQVYRDLRIITARPTPDEEARVPHRLYGHVDADVNCSAGMWVADAAAALEEALAQNRLPIFAGGSGLYFKALTRGLSAVPPIPSQVRDDVRARLERDGAEALHAVLARRDPAAAQRLKPRDRARIARALEVVEATGRSLTDWHRDGLPPLLPPDKVRAIFLAPDREALYARIDARFGAMLAAGALEEVRALAERHLDPLLPAMKAHGVPALMRHLRGEISLEEAAEIGRADTRHYAKRQFTWFRHQLPEFRWTSPEEAEAQLSCVIPGPR</sequence>
<protein>
    <recommendedName>
        <fullName evidence="1">tRNA dimethylallyltransferase</fullName>
        <ecNumber evidence="1">2.5.1.75</ecNumber>
    </recommendedName>
    <alternativeName>
        <fullName evidence="1">Dimethylallyl diphosphate:tRNA dimethylallyltransferase</fullName>
        <shortName evidence="1">DMAPP:tRNA dimethylallyltransferase</shortName>
        <shortName evidence="1">DMATase</shortName>
    </alternativeName>
    <alternativeName>
        <fullName evidence="1">Isopentenyl-diphosphate:tRNA isopentenyltransferase</fullName>
        <shortName evidence="1">IPP transferase</shortName>
        <shortName evidence="1">IPPT</shortName>
        <shortName evidence="1">IPTase</shortName>
    </alternativeName>
</protein>
<name>MIAA_NITHX</name>
<evidence type="ECO:0000255" key="1">
    <source>
        <dbReference type="HAMAP-Rule" id="MF_00185"/>
    </source>
</evidence>
<feature type="chain" id="PRO_0000377242" description="tRNA dimethylallyltransferase">
    <location>
        <begin position="1"/>
        <end position="317"/>
    </location>
</feature>
<feature type="region of interest" description="Interaction with substrate tRNA" evidence="1">
    <location>
        <begin position="46"/>
        <end position="49"/>
    </location>
</feature>
<feature type="binding site" evidence="1">
    <location>
        <begin position="21"/>
        <end position="28"/>
    </location>
    <ligand>
        <name>ATP</name>
        <dbReference type="ChEBI" id="CHEBI:30616"/>
    </ligand>
</feature>
<feature type="binding site" evidence="1">
    <location>
        <begin position="23"/>
        <end position="28"/>
    </location>
    <ligand>
        <name>substrate</name>
    </ligand>
</feature>
<feature type="site" description="Interaction with substrate tRNA" evidence="1">
    <location>
        <position position="112"/>
    </location>
</feature>
<feature type="site" description="Interaction with substrate tRNA" evidence="1">
    <location>
        <position position="134"/>
    </location>
</feature>
<dbReference type="EC" id="2.5.1.75" evidence="1"/>
<dbReference type="EMBL" id="CP000319">
    <property type="protein sequence ID" value="ABE63502.1"/>
    <property type="molecule type" value="Genomic_DNA"/>
</dbReference>
<dbReference type="RefSeq" id="WP_011511168.1">
    <property type="nucleotide sequence ID" value="NC_007964.1"/>
</dbReference>
<dbReference type="SMR" id="Q1QJU5"/>
<dbReference type="STRING" id="323097.Nham_2723"/>
<dbReference type="KEGG" id="nha:Nham_2723"/>
<dbReference type="eggNOG" id="COG0324">
    <property type="taxonomic scope" value="Bacteria"/>
</dbReference>
<dbReference type="HOGENOM" id="CLU_032616_0_1_5"/>
<dbReference type="OrthoDB" id="9776390at2"/>
<dbReference type="Proteomes" id="UP000001953">
    <property type="component" value="Chromosome"/>
</dbReference>
<dbReference type="GO" id="GO:0005524">
    <property type="term" value="F:ATP binding"/>
    <property type="evidence" value="ECO:0007669"/>
    <property type="project" value="UniProtKB-UniRule"/>
</dbReference>
<dbReference type="GO" id="GO:0052381">
    <property type="term" value="F:tRNA dimethylallyltransferase activity"/>
    <property type="evidence" value="ECO:0007669"/>
    <property type="project" value="UniProtKB-UniRule"/>
</dbReference>
<dbReference type="GO" id="GO:0006400">
    <property type="term" value="P:tRNA modification"/>
    <property type="evidence" value="ECO:0007669"/>
    <property type="project" value="TreeGrafter"/>
</dbReference>
<dbReference type="Gene3D" id="1.10.20.140">
    <property type="match status" value="1"/>
</dbReference>
<dbReference type="Gene3D" id="3.40.50.300">
    <property type="entry name" value="P-loop containing nucleotide triphosphate hydrolases"/>
    <property type="match status" value="1"/>
</dbReference>
<dbReference type="HAMAP" id="MF_00185">
    <property type="entry name" value="IPP_trans"/>
    <property type="match status" value="1"/>
</dbReference>
<dbReference type="InterPro" id="IPR039657">
    <property type="entry name" value="Dimethylallyltransferase"/>
</dbReference>
<dbReference type="InterPro" id="IPR018022">
    <property type="entry name" value="IPT"/>
</dbReference>
<dbReference type="InterPro" id="IPR027417">
    <property type="entry name" value="P-loop_NTPase"/>
</dbReference>
<dbReference type="NCBIfam" id="TIGR00174">
    <property type="entry name" value="miaA"/>
    <property type="match status" value="1"/>
</dbReference>
<dbReference type="PANTHER" id="PTHR11088">
    <property type="entry name" value="TRNA DIMETHYLALLYLTRANSFERASE"/>
    <property type="match status" value="1"/>
</dbReference>
<dbReference type="PANTHER" id="PTHR11088:SF60">
    <property type="entry name" value="TRNA DIMETHYLALLYLTRANSFERASE"/>
    <property type="match status" value="1"/>
</dbReference>
<dbReference type="Pfam" id="PF01715">
    <property type="entry name" value="IPPT"/>
    <property type="match status" value="1"/>
</dbReference>
<dbReference type="SUPFAM" id="SSF52540">
    <property type="entry name" value="P-loop containing nucleoside triphosphate hydrolases"/>
    <property type="match status" value="2"/>
</dbReference>
<reference key="1">
    <citation type="submission" date="2006-03" db="EMBL/GenBank/DDBJ databases">
        <title>Complete sequence of chromosome of Nitrobacter hamburgensis X14.</title>
        <authorList>
            <consortium name="US DOE Joint Genome Institute"/>
            <person name="Copeland A."/>
            <person name="Lucas S."/>
            <person name="Lapidus A."/>
            <person name="Barry K."/>
            <person name="Detter J.C."/>
            <person name="Glavina del Rio T."/>
            <person name="Hammon N."/>
            <person name="Israni S."/>
            <person name="Dalin E."/>
            <person name="Tice H."/>
            <person name="Pitluck S."/>
            <person name="Chain P."/>
            <person name="Malfatti S."/>
            <person name="Shin M."/>
            <person name="Vergez L."/>
            <person name="Schmutz J."/>
            <person name="Larimer F."/>
            <person name="Land M."/>
            <person name="Hauser L."/>
            <person name="Kyrpides N."/>
            <person name="Ivanova N."/>
            <person name="Ward B."/>
            <person name="Arp D."/>
            <person name="Klotz M."/>
            <person name="Stein L."/>
            <person name="O'Mullan G."/>
            <person name="Starkenburg S."/>
            <person name="Sayavedra L."/>
            <person name="Poret-Peterson A.T."/>
            <person name="Gentry M.E."/>
            <person name="Bruce D."/>
            <person name="Richardson P."/>
        </authorList>
    </citation>
    <scope>NUCLEOTIDE SEQUENCE [LARGE SCALE GENOMIC DNA]</scope>
    <source>
        <strain>DSM 10229 / NCIMB 13809 / X14</strain>
    </source>
</reference>
<comment type="function">
    <text evidence="1">Catalyzes the transfer of a dimethylallyl group onto the adenine at position 37 in tRNAs that read codons beginning with uridine, leading to the formation of N6-(dimethylallyl)adenosine (i(6)A).</text>
</comment>
<comment type="catalytic activity">
    <reaction evidence="1">
        <text>adenosine(37) in tRNA + dimethylallyl diphosphate = N(6)-dimethylallyladenosine(37) in tRNA + diphosphate</text>
        <dbReference type="Rhea" id="RHEA:26482"/>
        <dbReference type="Rhea" id="RHEA-COMP:10162"/>
        <dbReference type="Rhea" id="RHEA-COMP:10375"/>
        <dbReference type="ChEBI" id="CHEBI:33019"/>
        <dbReference type="ChEBI" id="CHEBI:57623"/>
        <dbReference type="ChEBI" id="CHEBI:74411"/>
        <dbReference type="ChEBI" id="CHEBI:74415"/>
        <dbReference type="EC" id="2.5.1.75"/>
    </reaction>
</comment>
<comment type="cofactor">
    <cofactor evidence="1">
        <name>Mg(2+)</name>
        <dbReference type="ChEBI" id="CHEBI:18420"/>
    </cofactor>
</comment>
<comment type="subunit">
    <text evidence="1">Monomer.</text>
</comment>
<comment type="similarity">
    <text evidence="1">Belongs to the IPP transferase family.</text>
</comment>
<accession>Q1QJU5</accession>
<keyword id="KW-0067">ATP-binding</keyword>
<keyword id="KW-0460">Magnesium</keyword>
<keyword id="KW-0547">Nucleotide-binding</keyword>
<keyword id="KW-1185">Reference proteome</keyword>
<keyword id="KW-0808">Transferase</keyword>
<keyword id="KW-0819">tRNA processing</keyword>
<organism>
    <name type="scientific">Nitrobacter hamburgensis (strain DSM 10229 / NCIMB 13809 / X14)</name>
    <dbReference type="NCBI Taxonomy" id="323097"/>
    <lineage>
        <taxon>Bacteria</taxon>
        <taxon>Pseudomonadati</taxon>
        <taxon>Pseudomonadota</taxon>
        <taxon>Alphaproteobacteria</taxon>
        <taxon>Hyphomicrobiales</taxon>
        <taxon>Nitrobacteraceae</taxon>
        <taxon>Nitrobacter</taxon>
    </lineage>
</organism>